<feature type="signal peptide" evidence="1">
    <location>
        <begin position="1"/>
        <end position="24"/>
    </location>
</feature>
<feature type="chain" id="PRO_0000415435" description="Heat shock 70 kDa protein 17">
    <location>
        <begin position="25"/>
        <end position="867"/>
    </location>
</feature>
<feature type="region of interest" description="Disordered" evidence="3">
    <location>
        <begin position="560"/>
        <end position="607"/>
    </location>
</feature>
<feature type="region of interest" description="Disordered" evidence="3">
    <location>
        <begin position="829"/>
        <end position="867"/>
    </location>
</feature>
<feature type="short sequence motif" description="Prevents secretion from ER" evidence="2">
    <location>
        <begin position="865"/>
        <end position="867"/>
    </location>
</feature>
<feature type="compositionally biased region" description="Polar residues" evidence="3">
    <location>
        <begin position="560"/>
        <end position="575"/>
    </location>
</feature>
<feature type="compositionally biased region" description="Polar residues" evidence="3">
    <location>
        <begin position="587"/>
        <end position="598"/>
    </location>
</feature>
<feature type="compositionally biased region" description="Basic and acidic residues" evidence="3">
    <location>
        <begin position="833"/>
        <end position="867"/>
    </location>
</feature>
<feature type="sequence conflict" description="In Ref. 5; BAF01805." evidence="4" ref="5">
    <original>L</original>
    <variation>I</variation>
    <location>
        <position position="413"/>
    </location>
</feature>
<feature type="sequence conflict" description="In Ref. 4; AAK93685." evidence="4" ref="4">
    <original>R</original>
    <variation>Q</variation>
    <location>
        <position position="741"/>
    </location>
</feature>
<gene>
    <name type="primary">HSP70-17</name>
    <name type="ordered locus">At4g16660</name>
    <name type="ORF">dl4355w</name>
    <name type="ORF">FCAALL.64</name>
</gene>
<keyword id="KW-0067">ATP-binding</keyword>
<keyword id="KW-0143">Chaperone</keyword>
<keyword id="KW-0256">Endoplasmic reticulum</keyword>
<keyword id="KW-0547">Nucleotide-binding</keyword>
<keyword id="KW-1185">Reference proteome</keyword>
<keyword id="KW-0732">Signal</keyword>
<reference key="1">
    <citation type="journal article" date="1998" name="Nature">
        <title>Analysis of 1.9 Mb of contiguous sequence from chromosome 4 of Arabidopsis thaliana.</title>
        <authorList>
            <person name="Bevan M."/>
            <person name="Bancroft I."/>
            <person name="Bent E."/>
            <person name="Love K."/>
            <person name="Goodman H.M."/>
            <person name="Dean C."/>
            <person name="Bergkamp R."/>
            <person name="Dirkse W."/>
            <person name="van Staveren M."/>
            <person name="Stiekema W."/>
            <person name="Drost L."/>
            <person name="Ridley P."/>
            <person name="Hudson S.-A."/>
            <person name="Patel K."/>
            <person name="Murphy G."/>
            <person name="Piffanelli P."/>
            <person name="Wedler H."/>
            <person name="Wedler E."/>
            <person name="Wambutt R."/>
            <person name="Weitzenegger T."/>
            <person name="Pohl T."/>
            <person name="Terryn N."/>
            <person name="Gielen J."/>
            <person name="Villarroel R."/>
            <person name="De Clercq R."/>
            <person name="van Montagu M."/>
            <person name="Lecharny A."/>
            <person name="Aubourg S."/>
            <person name="Gy I."/>
            <person name="Kreis M."/>
            <person name="Lao N."/>
            <person name="Kavanagh T."/>
            <person name="Hempel S."/>
            <person name="Kotter P."/>
            <person name="Entian K.-D."/>
            <person name="Rieger M."/>
            <person name="Schaefer M."/>
            <person name="Funk B."/>
            <person name="Mueller-Auer S."/>
            <person name="Silvey M."/>
            <person name="James R."/>
            <person name="Monfort A."/>
            <person name="Pons A."/>
            <person name="Puigdomenech P."/>
            <person name="Douka A."/>
            <person name="Voukelatou E."/>
            <person name="Milioni D."/>
            <person name="Hatzopoulos P."/>
            <person name="Piravandi E."/>
            <person name="Obermaier B."/>
            <person name="Hilbert H."/>
            <person name="Duesterhoeft A."/>
            <person name="Moores T."/>
            <person name="Jones J.D.G."/>
            <person name="Eneva T."/>
            <person name="Palme K."/>
            <person name="Benes V."/>
            <person name="Rechmann S."/>
            <person name="Ansorge W."/>
            <person name="Cooke R."/>
            <person name="Berger C."/>
            <person name="Delseny M."/>
            <person name="Voet M."/>
            <person name="Volckaert G."/>
            <person name="Mewes H.-W."/>
            <person name="Klosterman S."/>
            <person name="Schueller C."/>
            <person name="Chalwatzis N."/>
        </authorList>
    </citation>
    <scope>NUCLEOTIDE SEQUENCE [LARGE SCALE GENOMIC DNA]</scope>
    <source>
        <strain>cv. Columbia</strain>
    </source>
</reference>
<reference key="2">
    <citation type="journal article" date="1999" name="Nature">
        <title>Sequence and analysis of chromosome 4 of the plant Arabidopsis thaliana.</title>
        <authorList>
            <person name="Mayer K.F.X."/>
            <person name="Schueller C."/>
            <person name="Wambutt R."/>
            <person name="Murphy G."/>
            <person name="Volckaert G."/>
            <person name="Pohl T."/>
            <person name="Duesterhoeft A."/>
            <person name="Stiekema W."/>
            <person name="Entian K.-D."/>
            <person name="Terryn N."/>
            <person name="Harris B."/>
            <person name="Ansorge W."/>
            <person name="Brandt P."/>
            <person name="Grivell L.A."/>
            <person name="Rieger M."/>
            <person name="Weichselgartner M."/>
            <person name="de Simone V."/>
            <person name="Obermaier B."/>
            <person name="Mache R."/>
            <person name="Mueller M."/>
            <person name="Kreis M."/>
            <person name="Delseny M."/>
            <person name="Puigdomenech P."/>
            <person name="Watson M."/>
            <person name="Schmidtheini T."/>
            <person name="Reichert B."/>
            <person name="Portetelle D."/>
            <person name="Perez-Alonso M."/>
            <person name="Boutry M."/>
            <person name="Bancroft I."/>
            <person name="Vos P."/>
            <person name="Hoheisel J."/>
            <person name="Zimmermann W."/>
            <person name="Wedler H."/>
            <person name="Ridley P."/>
            <person name="Langham S.-A."/>
            <person name="McCullagh B."/>
            <person name="Bilham L."/>
            <person name="Robben J."/>
            <person name="van der Schueren J."/>
            <person name="Grymonprez B."/>
            <person name="Chuang Y.-J."/>
            <person name="Vandenbussche F."/>
            <person name="Braeken M."/>
            <person name="Weltjens I."/>
            <person name="Voet M."/>
            <person name="Bastiaens I."/>
            <person name="Aert R."/>
            <person name="Defoor E."/>
            <person name="Weitzenegger T."/>
            <person name="Bothe G."/>
            <person name="Ramsperger U."/>
            <person name="Hilbert H."/>
            <person name="Braun M."/>
            <person name="Holzer E."/>
            <person name="Brandt A."/>
            <person name="Peters S."/>
            <person name="van Staveren M."/>
            <person name="Dirkse W."/>
            <person name="Mooijman P."/>
            <person name="Klein Lankhorst R."/>
            <person name="Rose M."/>
            <person name="Hauf J."/>
            <person name="Koetter P."/>
            <person name="Berneiser S."/>
            <person name="Hempel S."/>
            <person name="Feldpausch M."/>
            <person name="Lamberth S."/>
            <person name="Van den Daele H."/>
            <person name="De Keyser A."/>
            <person name="Buysshaert C."/>
            <person name="Gielen J."/>
            <person name="Villarroel R."/>
            <person name="De Clercq R."/>
            <person name="van Montagu M."/>
            <person name="Rogers J."/>
            <person name="Cronin A."/>
            <person name="Quail M.A."/>
            <person name="Bray-Allen S."/>
            <person name="Clark L."/>
            <person name="Doggett J."/>
            <person name="Hall S."/>
            <person name="Kay M."/>
            <person name="Lennard N."/>
            <person name="McLay K."/>
            <person name="Mayes R."/>
            <person name="Pettett A."/>
            <person name="Rajandream M.A."/>
            <person name="Lyne M."/>
            <person name="Benes V."/>
            <person name="Rechmann S."/>
            <person name="Borkova D."/>
            <person name="Bloecker H."/>
            <person name="Scharfe M."/>
            <person name="Grimm M."/>
            <person name="Loehnert T.-H."/>
            <person name="Dose S."/>
            <person name="de Haan M."/>
            <person name="Maarse A.C."/>
            <person name="Schaefer M."/>
            <person name="Mueller-Auer S."/>
            <person name="Gabel C."/>
            <person name="Fuchs M."/>
            <person name="Fartmann B."/>
            <person name="Granderath K."/>
            <person name="Dauner D."/>
            <person name="Herzl A."/>
            <person name="Neumann S."/>
            <person name="Argiriou A."/>
            <person name="Vitale D."/>
            <person name="Liguori R."/>
            <person name="Piravandi E."/>
            <person name="Massenet O."/>
            <person name="Quigley F."/>
            <person name="Clabauld G."/>
            <person name="Muendlein A."/>
            <person name="Felber R."/>
            <person name="Schnabl S."/>
            <person name="Hiller R."/>
            <person name="Schmidt W."/>
            <person name="Lecharny A."/>
            <person name="Aubourg S."/>
            <person name="Chefdor F."/>
            <person name="Cooke R."/>
            <person name="Berger C."/>
            <person name="Monfort A."/>
            <person name="Casacuberta E."/>
            <person name="Gibbons T."/>
            <person name="Weber N."/>
            <person name="Vandenbol M."/>
            <person name="Bargues M."/>
            <person name="Terol J."/>
            <person name="Torres A."/>
            <person name="Perez-Perez A."/>
            <person name="Purnelle B."/>
            <person name="Bent E."/>
            <person name="Johnson S."/>
            <person name="Tacon D."/>
            <person name="Jesse T."/>
            <person name="Heijnen L."/>
            <person name="Schwarz S."/>
            <person name="Scholler P."/>
            <person name="Heber S."/>
            <person name="Francs P."/>
            <person name="Bielke C."/>
            <person name="Frishman D."/>
            <person name="Haase D."/>
            <person name="Lemcke K."/>
            <person name="Mewes H.-W."/>
            <person name="Stocker S."/>
            <person name="Zaccaria P."/>
            <person name="Bevan M."/>
            <person name="Wilson R.K."/>
            <person name="de la Bastide M."/>
            <person name="Habermann K."/>
            <person name="Parnell L."/>
            <person name="Dedhia N."/>
            <person name="Gnoj L."/>
            <person name="Schutz K."/>
            <person name="Huang E."/>
            <person name="Spiegel L."/>
            <person name="Sekhon M."/>
            <person name="Murray J."/>
            <person name="Sheet P."/>
            <person name="Cordes M."/>
            <person name="Abu-Threideh J."/>
            <person name="Stoneking T."/>
            <person name="Kalicki J."/>
            <person name="Graves T."/>
            <person name="Harmon G."/>
            <person name="Edwards J."/>
            <person name="Latreille P."/>
            <person name="Courtney L."/>
            <person name="Cloud J."/>
            <person name="Abbott A."/>
            <person name="Scott K."/>
            <person name="Johnson D."/>
            <person name="Minx P."/>
            <person name="Bentley D."/>
            <person name="Fulton B."/>
            <person name="Miller N."/>
            <person name="Greco T."/>
            <person name="Kemp K."/>
            <person name="Kramer J."/>
            <person name="Fulton L."/>
            <person name="Mardis E."/>
            <person name="Dante M."/>
            <person name="Pepin K."/>
            <person name="Hillier L.W."/>
            <person name="Nelson J."/>
            <person name="Spieth J."/>
            <person name="Ryan E."/>
            <person name="Andrews S."/>
            <person name="Geisel C."/>
            <person name="Layman D."/>
            <person name="Du H."/>
            <person name="Ali J."/>
            <person name="Berghoff A."/>
            <person name="Jones K."/>
            <person name="Drone K."/>
            <person name="Cotton M."/>
            <person name="Joshu C."/>
            <person name="Antonoiu B."/>
            <person name="Zidanic M."/>
            <person name="Strong C."/>
            <person name="Sun H."/>
            <person name="Lamar B."/>
            <person name="Yordan C."/>
            <person name="Ma P."/>
            <person name="Zhong J."/>
            <person name="Preston R."/>
            <person name="Vil D."/>
            <person name="Shekher M."/>
            <person name="Matero A."/>
            <person name="Shah R."/>
            <person name="Swaby I.K."/>
            <person name="O'Shaughnessy A."/>
            <person name="Rodriguez M."/>
            <person name="Hoffman J."/>
            <person name="Till S."/>
            <person name="Granat S."/>
            <person name="Shohdy N."/>
            <person name="Hasegawa A."/>
            <person name="Hameed A."/>
            <person name="Lodhi M."/>
            <person name="Johnson A."/>
            <person name="Chen E."/>
            <person name="Marra M.A."/>
            <person name="Martienssen R."/>
            <person name="McCombie W.R."/>
        </authorList>
    </citation>
    <scope>NUCLEOTIDE SEQUENCE [LARGE SCALE GENOMIC DNA]</scope>
    <source>
        <strain>cv. Columbia</strain>
    </source>
</reference>
<reference key="3">
    <citation type="journal article" date="2017" name="Plant J.">
        <title>Araport11: a complete reannotation of the Arabidopsis thaliana reference genome.</title>
        <authorList>
            <person name="Cheng C.Y."/>
            <person name="Krishnakumar V."/>
            <person name="Chan A.P."/>
            <person name="Thibaud-Nissen F."/>
            <person name="Schobel S."/>
            <person name="Town C.D."/>
        </authorList>
    </citation>
    <scope>GENOME REANNOTATION</scope>
    <source>
        <strain>cv. Columbia</strain>
    </source>
</reference>
<reference key="4">
    <citation type="journal article" date="2003" name="Science">
        <title>Empirical analysis of transcriptional activity in the Arabidopsis genome.</title>
        <authorList>
            <person name="Yamada K."/>
            <person name="Lim J."/>
            <person name="Dale J.M."/>
            <person name="Chen H."/>
            <person name="Shinn P."/>
            <person name="Palm C.J."/>
            <person name="Southwick A.M."/>
            <person name="Wu H.C."/>
            <person name="Kim C.J."/>
            <person name="Nguyen M."/>
            <person name="Pham P.K."/>
            <person name="Cheuk R.F."/>
            <person name="Karlin-Newmann G."/>
            <person name="Liu S.X."/>
            <person name="Lam B."/>
            <person name="Sakano H."/>
            <person name="Wu T."/>
            <person name="Yu G."/>
            <person name="Miranda M."/>
            <person name="Quach H.L."/>
            <person name="Tripp M."/>
            <person name="Chang C.H."/>
            <person name="Lee J.M."/>
            <person name="Toriumi M.J."/>
            <person name="Chan M.M."/>
            <person name="Tang C.C."/>
            <person name="Onodera C.S."/>
            <person name="Deng J.M."/>
            <person name="Akiyama K."/>
            <person name="Ansari Y."/>
            <person name="Arakawa T."/>
            <person name="Banh J."/>
            <person name="Banno F."/>
            <person name="Bowser L."/>
            <person name="Brooks S.Y."/>
            <person name="Carninci P."/>
            <person name="Chao Q."/>
            <person name="Choy N."/>
            <person name="Enju A."/>
            <person name="Goldsmith A.D."/>
            <person name="Gurjal M."/>
            <person name="Hansen N.F."/>
            <person name="Hayashizaki Y."/>
            <person name="Johnson-Hopson C."/>
            <person name="Hsuan V.W."/>
            <person name="Iida K."/>
            <person name="Karnes M."/>
            <person name="Khan S."/>
            <person name="Koesema E."/>
            <person name="Ishida J."/>
            <person name="Jiang P.X."/>
            <person name="Jones T."/>
            <person name="Kawai J."/>
            <person name="Kamiya A."/>
            <person name="Meyers C."/>
            <person name="Nakajima M."/>
            <person name="Narusaka M."/>
            <person name="Seki M."/>
            <person name="Sakurai T."/>
            <person name="Satou M."/>
            <person name="Tamse R."/>
            <person name="Vaysberg M."/>
            <person name="Wallender E.K."/>
            <person name="Wong C."/>
            <person name="Yamamura Y."/>
            <person name="Yuan S."/>
            <person name="Shinozaki K."/>
            <person name="Davis R.W."/>
            <person name="Theologis A."/>
            <person name="Ecker J.R."/>
        </authorList>
    </citation>
    <scope>NUCLEOTIDE SEQUENCE [LARGE SCALE MRNA]</scope>
    <source>
        <strain>cv. Columbia</strain>
    </source>
</reference>
<reference key="5">
    <citation type="submission" date="2006-07" db="EMBL/GenBank/DDBJ databases">
        <title>Large-scale analysis of RIKEN Arabidopsis full-length (RAFL) cDNAs.</title>
        <authorList>
            <person name="Totoki Y."/>
            <person name="Seki M."/>
            <person name="Ishida J."/>
            <person name="Nakajima M."/>
            <person name="Enju A."/>
            <person name="Kamiya A."/>
            <person name="Narusaka M."/>
            <person name="Shin-i T."/>
            <person name="Nakagawa M."/>
            <person name="Sakamoto N."/>
            <person name="Oishi K."/>
            <person name="Kohara Y."/>
            <person name="Kobayashi M."/>
            <person name="Toyoda A."/>
            <person name="Sakaki Y."/>
            <person name="Sakurai T."/>
            <person name="Iida K."/>
            <person name="Akiyama K."/>
            <person name="Satou M."/>
            <person name="Toyoda T."/>
            <person name="Konagaya A."/>
            <person name="Carninci P."/>
            <person name="Kawai J."/>
            <person name="Hayashizaki Y."/>
            <person name="Shinozaki K."/>
        </authorList>
    </citation>
    <scope>NUCLEOTIDE SEQUENCE [LARGE SCALE MRNA] OF 167-867</scope>
    <source>
        <strain>cv. Columbia</strain>
    </source>
</reference>
<reference key="6">
    <citation type="journal article" date="2001" name="Cell Stress Chaperones">
        <title>Genomic analysis of the Hsp70 superfamily in Arabidopsis thaliana.</title>
        <authorList>
            <person name="Lin B.L."/>
            <person name="Wang J.S."/>
            <person name="Liu H.C."/>
            <person name="Chen R.W."/>
            <person name="Meyer Y."/>
            <person name="Barakat A."/>
            <person name="Delseny M."/>
        </authorList>
    </citation>
    <scope>GENE FAMILY</scope>
    <scope>NOMENCLATURE</scope>
</reference>
<proteinExistence type="evidence at transcript level"/>
<sequence length="867" mass="96725">MGKIFSWLVVLLSLISLVPVPSESAVLSVDLGSEWVKVAVVNLKRGQSPISVAINEMSKRKSPALVAFQSGDRLLGEEAAGITARYPNKVYSQLRDMVGKPFKHVKDFIDSVYLPFDIVEDSRGAVGIKIDDGSTVYSVEELLAMILGYASNLAEFHAKIPVKDMVVSVPPYFGQAERRGLIQASQLAGVNVLSLVNEHSGAALQYGIDKDFANGSRHVIFYDMGSSSTYAALVYYSAYSEKEYGKTVSVNQFQVKDVRWDLGLGGQSMEMRLVEHFADEFNKQLGNGVDVRKFPKAMAKLKKQVKRTKEILSANTAAPISVESLHDDRDFRSTITREKFEELCKDLWERSLTPLKDVLKHSGLKIDDISAVELIGGATRVPKLQSTIQEFIGKQQLDKHLDADEAIVLGSALHAANLSDGIKLKRRLGIVDGSPYGFLVELEGPNVKKDESTKQQLVPRMKKLPSKMFRSFVLDKDFDVSLAYESEGILPPGTTSPVFAQYSVSGLADASEKYSSRNLSAPIKANLHFSLSRSGILSLDRGDAVIEITEWVDVPKKNVTIDSNTTTSTGNATDENSQENKEDLQTDAENSTASNTTAEEPAVASLGTEKKLKKRTFRIPLKVVEKTVGPGAPFSKESLAEAKIKLEALDKKDRERRRTAELKNNLESYIYATKEKLETPEFEKISTQEERKAFVEKLDEVQDWLYMDGEDANATEFEKRLDSLKAIGSPISFRSEELTARPVAIEYARKYLTELKEIIKEWETNKTWLPKEKIDEVSKEAEKVKSWLDKNVAEQEKTSLWSKPVFTSTEVYAKVFTLQDKVTKVNKIPKPKPKIEKVTKTENTTKEEEQSKSSDEAAKEEESHDEL</sequence>
<accession>F4JMJ1</accession>
<accession>O23509</accession>
<accession>Q0WM51</accession>
<accession>Q949M5</accession>
<comment type="subcellular location">
    <subcellularLocation>
        <location evidence="2">Endoplasmic reticulum lumen</location>
    </subcellularLocation>
</comment>
<comment type="similarity">
    <text evidence="4">Belongs to the heat shock protein 70 (TC 1.A.33) family. HSP110/SSE subfamily.</text>
</comment>
<comment type="sequence caution" evidence="4">
    <conflict type="erroneous gene model prediction">
        <sequence resource="EMBL-CDS" id="CAB46039"/>
    </conflict>
</comment>
<comment type="sequence caution" evidence="4">
    <conflict type="erroneous gene model prediction">
        <sequence resource="EMBL-CDS" id="CAB78708"/>
    </conflict>
</comment>
<evidence type="ECO:0000255" key="1"/>
<evidence type="ECO:0000255" key="2">
    <source>
        <dbReference type="PROSITE-ProRule" id="PRU10138"/>
    </source>
</evidence>
<evidence type="ECO:0000256" key="3">
    <source>
        <dbReference type="SAM" id="MobiDB-lite"/>
    </source>
</evidence>
<evidence type="ECO:0000305" key="4"/>
<protein>
    <recommendedName>
        <fullName>Heat shock 70 kDa protein 17</fullName>
    </recommendedName>
    <alternativeName>
        <fullName>Heat shock protein 70-17</fullName>
        <shortName>AtHsp70-17</shortName>
    </alternativeName>
</protein>
<dbReference type="EMBL" id="Z97341">
    <property type="protein sequence ID" value="CAB46039.1"/>
    <property type="status" value="ALT_SEQ"/>
    <property type="molecule type" value="Genomic_DNA"/>
</dbReference>
<dbReference type="EMBL" id="AL161544">
    <property type="protein sequence ID" value="CAB78708.1"/>
    <property type="status" value="ALT_SEQ"/>
    <property type="molecule type" value="Genomic_DNA"/>
</dbReference>
<dbReference type="EMBL" id="CP002687">
    <property type="protein sequence ID" value="AEE83781.1"/>
    <property type="molecule type" value="Genomic_DNA"/>
</dbReference>
<dbReference type="EMBL" id="AY051008">
    <property type="protein sequence ID" value="AAK93685.1"/>
    <property type="molecule type" value="mRNA"/>
</dbReference>
<dbReference type="EMBL" id="AK229980">
    <property type="protein sequence ID" value="BAF01805.1"/>
    <property type="molecule type" value="mRNA"/>
</dbReference>
<dbReference type="PIR" id="E85185">
    <property type="entry name" value="E85185"/>
</dbReference>
<dbReference type="PIR" id="G71433">
    <property type="entry name" value="G71433"/>
</dbReference>
<dbReference type="RefSeq" id="NP_567510.1">
    <property type="nucleotide sequence ID" value="NM_117767.4"/>
</dbReference>
<dbReference type="SMR" id="F4JMJ1"/>
<dbReference type="BioGRID" id="12660">
    <property type="interactions" value="2"/>
</dbReference>
<dbReference type="FunCoup" id="F4JMJ1">
    <property type="interactions" value="3727"/>
</dbReference>
<dbReference type="STRING" id="3702.F4JMJ1"/>
<dbReference type="iPTMnet" id="F4JMJ1"/>
<dbReference type="PaxDb" id="3702-AT4G16660.1"/>
<dbReference type="ProMEX" id="F4JMJ1"/>
<dbReference type="EnsemblPlants" id="AT4G16660.1">
    <property type="protein sequence ID" value="AT4G16660.1"/>
    <property type="gene ID" value="AT4G16660"/>
</dbReference>
<dbReference type="GeneID" id="827367"/>
<dbReference type="Gramene" id="AT4G16660.1">
    <property type="protein sequence ID" value="AT4G16660.1"/>
    <property type="gene ID" value="AT4G16660"/>
</dbReference>
<dbReference type="KEGG" id="ath:AT4G16660"/>
<dbReference type="Araport" id="AT4G16660"/>
<dbReference type="TAIR" id="AT4G16660">
    <property type="gene designation" value="HSP70"/>
</dbReference>
<dbReference type="eggNOG" id="KOG0103">
    <property type="taxonomic scope" value="Eukaryota"/>
</dbReference>
<dbReference type="eggNOG" id="KOG0104">
    <property type="taxonomic scope" value="Eukaryota"/>
</dbReference>
<dbReference type="HOGENOM" id="CLU_005965_5_0_1"/>
<dbReference type="InParanoid" id="F4JMJ1"/>
<dbReference type="OMA" id="SRTPMIQ"/>
<dbReference type="PRO" id="PR:F4JMJ1"/>
<dbReference type="Proteomes" id="UP000006548">
    <property type="component" value="Chromosome 4"/>
</dbReference>
<dbReference type="ExpressionAtlas" id="F4JMJ1">
    <property type="expression patterns" value="baseline and differential"/>
</dbReference>
<dbReference type="GO" id="GO:0005829">
    <property type="term" value="C:cytosol"/>
    <property type="evidence" value="ECO:0007005"/>
    <property type="project" value="TAIR"/>
</dbReference>
<dbReference type="GO" id="GO:0005783">
    <property type="term" value="C:endoplasmic reticulum"/>
    <property type="evidence" value="ECO:0007005"/>
    <property type="project" value="TAIR"/>
</dbReference>
<dbReference type="GO" id="GO:0005788">
    <property type="term" value="C:endoplasmic reticulum lumen"/>
    <property type="evidence" value="ECO:0007669"/>
    <property type="project" value="UniProtKB-SubCell"/>
</dbReference>
<dbReference type="GO" id="GO:0005794">
    <property type="term" value="C:Golgi apparatus"/>
    <property type="evidence" value="ECO:0007005"/>
    <property type="project" value="TAIR"/>
</dbReference>
<dbReference type="GO" id="GO:0000325">
    <property type="term" value="C:plant-type vacuole"/>
    <property type="evidence" value="ECO:0007005"/>
    <property type="project" value="TAIR"/>
</dbReference>
<dbReference type="GO" id="GO:0099503">
    <property type="term" value="C:secretory vesicle"/>
    <property type="evidence" value="ECO:0007005"/>
    <property type="project" value="TAIR"/>
</dbReference>
<dbReference type="GO" id="GO:0005524">
    <property type="term" value="F:ATP binding"/>
    <property type="evidence" value="ECO:0007669"/>
    <property type="project" value="UniProtKB-KW"/>
</dbReference>
<dbReference type="GO" id="GO:0140662">
    <property type="term" value="F:ATP-dependent protein folding chaperone"/>
    <property type="evidence" value="ECO:0007669"/>
    <property type="project" value="InterPro"/>
</dbReference>
<dbReference type="CDD" id="cd10230">
    <property type="entry name" value="ASKHA_NBD_HSP70_HYOU1"/>
    <property type="match status" value="1"/>
</dbReference>
<dbReference type="FunFam" id="2.60.34.10:FF:000017">
    <property type="entry name" value="Heat shock 70 kDa protein 17"/>
    <property type="match status" value="1"/>
</dbReference>
<dbReference type="FunFam" id="3.30.30.30:FF:000012">
    <property type="entry name" value="Heat shock 70 kDa protein 17"/>
    <property type="match status" value="1"/>
</dbReference>
<dbReference type="FunFam" id="1.20.1270.10:FF:000002">
    <property type="entry name" value="Heat shock 70 kDa protein 4"/>
    <property type="match status" value="1"/>
</dbReference>
<dbReference type="FunFam" id="3.90.640.10:FF:000004">
    <property type="entry name" value="Heat shock 70 kDa protein 4"/>
    <property type="match status" value="1"/>
</dbReference>
<dbReference type="Gene3D" id="1.20.1270.10">
    <property type="match status" value="1"/>
</dbReference>
<dbReference type="Gene3D" id="3.30.30.30">
    <property type="match status" value="1"/>
</dbReference>
<dbReference type="Gene3D" id="3.30.420.40">
    <property type="match status" value="2"/>
</dbReference>
<dbReference type="Gene3D" id="3.90.640.10">
    <property type="entry name" value="Actin, Chain A, domain 4"/>
    <property type="match status" value="1"/>
</dbReference>
<dbReference type="Gene3D" id="2.60.34.10">
    <property type="entry name" value="Substrate Binding Domain Of DNAk, Chain A, domain 1"/>
    <property type="match status" value="1"/>
</dbReference>
<dbReference type="InterPro" id="IPR043129">
    <property type="entry name" value="ATPase_NBD"/>
</dbReference>
<dbReference type="InterPro" id="IPR018181">
    <property type="entry name" value="Heat_shock_70_CS"/>
</dbReference>
<dbReference type="InterPro" id="IPR029048">
    <property type="entry name" value="HSP70_C_sf"/>
</dbReference>
<dbReference type="InterPro" id="IPR029047">
    <property type="entry name" value="HSP70_peptide-bd_sf"/>
</dbReference>
<dbReference type="InterPro" id="IPR013126">
    <property type="entry name" value="Hsp_70_fam"/>
</dbReference>
<dbReference type="PANTHER" id="PTHR45639">
    <property type="entry name" value="HSC70CB, ISOFORM G-RELATED"/>
    <property type="match status" value="1"/>
</dbReference>
<dbReference type="PANTHER" id="PTHR45639:SF3">
    <property type="entry name" value="HYPOXIA UP-REGULATED PROTEIN 1"/>
    <property type="match status" value="1"/>
</dbReference>
<dbReference type="Pfam" id="PF00012">
    <property type="entry name" value="HSP70"/>
    <property type="match status" value="1"/>
</dbReference>
<dbReference type="PRINTS" id="PR00301">
    <property type="entry name" value="HEATSHOCK70"/>
</dbReference>
<dbReference type="SUPFAM" id="SSF53067">
    <property type="entry name" value="Actin-like ATPase domain"/>
    <property type="match status" value="2"/>
</dbReference>
<dbReference type="SUPFAM" id="SSF100934">
    <property type="entry name" value="Heat shock protein 70kD (HSP70), C-terminal subdomain"/>
    <property type="match status" value="1"/>
</dbReference>
<dbReference type="PROSITE" id="PS00014">
    <property type="entry name" value="ER_TARGET"/>
    <property type="match status" value="1"/>
</dbReference>
<dbReference type="PROSITE" id="PS01036">
    <property type="entry name" value="HSP70_3"/>
    <property type="match status" value="1"/>
</dbReference>
<name>HSP7R_ARATH</name>
<organism>
    <name type="scientific">Arabidopsis thaliana</name>
    <name type="common">Mouse-ear cress</name>
    <dbReference type="NCBI Taxonomy" id="3702"/>
    <lineage>
        <taxon>Eukaryota</taxon>
        <taxon>Viridiplantae</taxon>
        <taxon>Streptophyta</taxon>
        <taxon>Embryophyta</taxon>
        <taxon>Tracheophyta</taxon>
        <taxon>Spermatophyta</taxon>
        <taxon>Magnoliopsida</taxon>
        <taxon>eudicotyledons</taxon>
        <taxon>Gunneridae</taxon>
        <taxon>Pentapetalae</taxon>
        <taxon>rosids</taxon>
        <taxon>malvids</taxon>
        <taxon>Brassicales</taxon>
        <taxon>Brassicaceae</taxon>
        <taxon>Camelineae</taxon>
        <taxon>Arabidopsis</taxon>
    </lineage>
</organism>